<sequence length="782" mass="88496">MTTTDSPSVLQDKDIDRLVNAQKKPQEEPTMKDKALLFEKQRQEKKMKHTEAKMETNPLTSAKTFRKAPTEASTATTKDSTKNVNNATSTNNATSTKNNTKNTPKNTPKNIPKNTTAKPPIPKSAMKPSVPAAAAAVSTSAATAPAATASVSVSEPAAAFSPASHDMASFMTGDTSAAIECLMNGTSTSTPQKSASGISTNKHVNAAASQVNNRSNTSNSFDSHTTQKAGSYNPNITNILSERELDSTDCYADSESRSQPHKPSVLLPTTVLTDNKTPTYPPSPEFFSDHTDARDVRVGASFVNHKQPYNFARNNHGSDVSSAMDNARRQASETRRSNLSSYNDRNQPAAHSYLRTAPNHMEKIRTEVDKEQTREKKLARERLARKQQRDKFDLLQTPQTKNKFNMQVPLDMSEEQLFEVICKLTTQLDQSQARVREVEELVQQCSEQLNERSVEIDSLKSQYEEGQGEKEMLVGQLEEQLKRVSEEKDVELRQATERMEKELNDVTATKDHEIQQLKQQVQDLTIQLSSATVSDVKTLRTDYEHYKSQCYRKDVMISELEARLQREENLEKFETELKDKEKRLIKTELRLGQQALEQDHERQKLEVEKKVLGEKDEEERLRERLRELGSRDRSYNRSSRDRSHDRLYERSPRSRDRSSRDRSRDRYSRSRSRSRYRRRSDSVKDYSVGPRDKGDLRSLALEKIIDFLLARQKAGAQRAHMDACYNVSGPGVRYGDGLSDATVEKVLKEFLNKDEGYLMDLLEGDGKRLDEYLGTIYSGVGV</sequence>
<organism>
    <name type="scientific">Yarrowia lipolytica (strain CLIB 122 / E 150)</name>
    <name type="common">Yeast</name>
    <name type="synonym">Candida lipolytica</name>
    <dbReference type="NCBI Taxonomy" id="284591"/>
    <lineage>
        <taxon>Eukaryota</taxon>
        <taxon>Fungi</taxon>
        <taxon>Dikarya</taxon>
        <taxon>Ascomycota</taxon>
        <taxon>Saccharomycotina</taxon>
        <taxon>Dipodascomycetes</taxon>
        <taxon>Dipodascales</taxon>
        <taxon>Dipodascales incertae sedis</taxon>
        <taxon>Yarrowia</taxon>
    </lineage>
</organism>
<protein>
    <recommendedName>
        <fullName>Uncharacterized protein YALI0A18139g</fullName>
    </recommendedName>
</protein>
<name>YL139_YARLI</name>
<evidence type="ECO:0000255" key="1"/>
<evidence type="ECO:0000256" key="2">
    <source>
        <dbReference type="SAM" id="MobiDB-lite"/>
    </source>
</evidence>
<gene>
    <name type="ordered locus">YALI0A18139g</name>
</gene>
<feature type="chain" id="PRO_0000358865" description="Uncharacterized protein YALI0A18139g">
    <location>
        <begin position="1"/>
        <end position="782"/>
    </location>
</feature>
<feature type="region of interest" description="Disordered" evidence="2">
    <location>
        <begin position="1"/>
        <end position="127"/>
    </location>
</feature>
<feature type="region of interest" description="Disordered" evidence="2">
    <location>
        <begin position="205"/>
        <end position="234"/>
    </location>
</feature>
<feature type="region of interest" description="Disordered" evidence="2">
    <location>
        <begin position="308"/>
        <end position="355"/>
    </location>
</feature>
<feature type="region of interest" description="Disordered" evidence="2">
    <location>
        <begin position="629"/>
        <end position="689"/>
    </location>
</feature>
<feature type="coiled-coil region" evidence="1">
    <location>
        <begin position="361"/>
        <end position="628"/>
    </location>
</feature>
<feature type="compositionally biased region" description="Basic and acidic residues" evidence="2">
    <location>
        <begin position="24"/>
        <end position="54"/>
    </location>
</feature>
<feature type="compositionally biased region" description="Low complexity" evidence="2">
    <location>
        <begin position="82"/>
        <end position="118"/>
    </location>
</feature>
<feature type="compositionally biased region" description="Polar residues" evidence="2">
    <location>
        <begin position="312"/>
        <end position="324"/>
    </location>
</feature>
<feature type="compositionally biased region" description="Basic and acidic residues" evidence="2">
    <location>
        <begin position="326"/>
        <end position="336"/>
    </location>
</feature>
<feature type="compositionally biased region" description="Polar residues" evidence="2">
    <location>
        <begin position="337"/>
        <end position="346"/>
    </location>
</feature>
<feature type="compositionally biased region" description="Basic and acidic residues" evidence="2">
    <location>
        <begin position="629"/>
        <end position="668"/>
    </location>
</feature>
<feature type="compositionally biased region" description="Basic residues" evidence="2">
    <location>
        <begin position="669"/>
        <end position="678"/>
    </location>
</feature>
<feature type="compositionally biased region" description="Basic and acidic residues" evidence="2">
    <location>
        <begin position="679"/>
        <end position="689"/>
    </location>
</feature>
<keyword id="KW-0175">Coiled coil</keyword>
<keyword id="KW-1185">Reference proteome</keyword>
<accession>P0C8L8</accession>
<accession>Q6CH89</accession>
<reference key="1">
    <citation type="journal article" date="2004" name="Nature">
        <title>Genome evolution in yeasts.</title>
        <authorList>
            <person name="Dujon B."/>
            <person name="Sherman D."/>
            <person name="Fischer G."/>
            <person name="Durrens P."/>
            <person name="Casaregola S."/>
            <person name="Lafontaine I."/>
            <person name="de Montigny J."/>
            <person name="Marck C."/>
            <person name="Neuveglise C."/>
            <person name="Talla E."/>
            <person name="Goffard N."/>
            <person name="Frangeul L."/>
            <person name="Aigle M."/>
            <person name="Anthouard V."/>
            <person name="Babour A."/>
            <person name="Barbe V."/>
            <person name="Barnay S."/>
            <person name="Blanchin S."/>
            <person name="Beckerich J.-M."/>
            <person name="Beyne E."/>
            <person name="Bleykasten C."/>
            <person name="Boisrame A."/>
            <person name="Boyer J."/>
            <person name="Cattolico L."/>
            <person name="Confanioleri F."/>
            <person name="de Daruvar A."/>
            <person name="Despons L."/>
            <person name="Fabre E."/>
            <person name="Fairhead C."/>
            <person name="Ferry-Dumazet H."/>
            <person name="Groppi A."/>
            <person name="Hantraye F."/>
            <person name="Hennequin C."/>
            <person name="Jauniaux N."/>
            <person name="Joyet P."/>
            <person name="Kachouri R."/>
            <person name="Kerrest A."/>
            <person name="Koszul R."/>
            <person name="Lemaire M."/>
            <person name="Lesur I."/>
            <person name="Ma L."/>
            <person name="Muller H."/>
            <person name="Nicaud J.-M."/>
            <person name="Nikolski M."/>
            <person name="Oztas S."/>
            <person name="Ozier-Kalogeropoulos O."/>
            <person name="Pellenz S."/>
            <person name="Potier S."/>
            <person name="Richard G.-F."/>
            <person name="Straub M.-L."/>
            <person name="Suleau A."/>
            <person name="Swennen D."/>
            <person name="Tekaia F."/>
            <person name="Wesolowski-Louvel M."/>
            <person name="Westhof E."/>
            <person name="Wirth B."/>
            <person name="Zeniou-Meyer M."/>
            <person name="Zivanovic Y."/>
            <person name="Bolotin-Fukuhara M."/>
            <person name="Thierry A."/>
            <person name="Bouchier C."/>
            <person name="Caudron B."/>
            <person name="Scarpelli C."/>
            <person name="Gaillardin C."/>
            <person name="Weissenbach J."/>
            <person name="Wincker P."/>
            <person name="Souciet J.-L."/>
        </authorList>
    </citation>
    <scope>NUCLEOTIDE SEQUENCE [LARGE SCALE GENOMIC DNA]</scope>
    <source>
        <strain>CLIB 122 / E 150</strain>
    </source>
</reference>
<proteinExistence type="predicted"/>
<dbReference type="EMBL" id="CR382127">
    <property type="protein sequence ID" value="CAG83902.2"/>
    <property type="molecule type" value="Genomic_DNA"/>
</dbReference>
<dbReference type="RefSeq" id="XP_499973.2">
    <property type="nucleotide sequence ID" value="XM_499973.2"/>
</dbReference>
<dbReference type="SMR" id="P0C8L8"/>
<dbReference type="STRING" id="284591.P0C8L8"/>
<dbReference type="EnsemblFungi" id="CAG83902">
    <property type="protein sequence ID" value="CAG83902"/>
    <property type="gene ID" value="YALI0_A18139g"/>
</dbReference>
<dbReference type="KEGG" id="yli:2906554"/>
<dbReference type="VEuPathDB" id="FungiDB:YALI0_A18139g"/>
<dbReference type="HOGENOM" id="CLU_358322_0_0_1"/>
<dbReference type="InParanoid" id="P0C8L8"/>
<dbReference type="OrthoDB" id="131679at4891"/>
<dbReference type="Proteomes" id="UP000001300">
    <property type="component" value="Chromosome A"/>
</dbReference>